<proteinExistence type="inferred from homology"/>
<reference key="1">
    <citation type="journal article" date="2002" name="Genome Res.">
        <title>The genome of Methanosarcina acetivorans reveals extensive metabolic and physiological diversity.</title>
        <authorList>
            <person name="Galagan J.E."/>
            <person name="Nusbaum C."/>
            <person name="Roy A."/>
            <person name="Endrizzi M.G."/>
            <person name="Macdonald P."/>
            <person name="FitzHugh W."/>
            <person name="Calvo S."/>
            <person name="Engels R."/>
            <person name="Smirnov S."/>
            <person name="Atnoor D."/>
            <person name="Brown A."/>
            <person name="Allen N."/>
            <person name="Naylor J."/>
            <person name="Stange-Thomann N."/>
            <person name="DeArellano K."/>
            <person name="Johnson R."/>
            <person name="Linton L."/>
            <person name="McEwan P."/>
            <person name="McKernan K."/>
            <person name="Talamas J."/>
            <person name="Tirrell A."/>
            <person name="Ye W."/>
            <person name="Zimmer A."/>
            <person name="Barber R.D."/>
            <person name="Cann I."/>
            <person name="Graham D.E."/>
            <person name="Grahame D.A."/>
            <person name="Guss A.M."/>
            <person name="Hedderich R."/>
            <person name="Ingram-Smith C."/>
            <person name="Kuettner H.C."/>
            <person name="Krzycki J.A."/>
            <person name="Leigh J.A."/>
            <person name="Li W."/>
            <person name="Liu J."/>
            <person name="Mukhopadhyay B."/>
            <person name="Reeve J.N."/>
            <person name="Smith K."/>
            <person name="Springer T.A."/>
            <person name="Umayam L.A."/>
            <person name="White O."/>
            <person name="White R.H."/>
            <person name="de Macario E.C."/>
            <person name="Ferry J.G."/>
            <person name="Jarrell K.F."/>
            <person name="Jing H."/>
            <person name="Macario A.J.L."/>
            <person name="Paulsen I.T."/>
            <person name="Pritchett M."/>
            <person name="Sowers K.R."/>
            <person name="Swanson R.V."/>
            <person name="Zinder S.H."/>
            <person name="Lander E."/>
            <person name="Metcalf W.W."/>
            <person name="Birren B."/>
        </authorList>
    </citation>
    <scope>NUCLEOTIDE SEQUENCE [LARGE SCALE GENOMIC DNA]</scope>
    <source>
        <strain>ATCC 35395 / DSM 2834 / JCM 12185 / C2A</strain>
    </source>
</reference>
<feature type="chain" id="PRO_0000155099" description="Acetyl-CoA decarbonylase/synthase complex subunit beta 1">
    <location>
        <begin position="1"/>
        <end position="469"/>
    </location>
</feature>
<feature type="binding site" evidence="1">
    <location>
        <position position="189"/>
    </location>
    <ligand>
        <name>[Ni-Fe-S] cluster</name>
        <dbReference type="ChEBI" id="CHEBI:60400"/>
    </ligand>
</feature>
<feature type="binding site" evidence="1">
    <location>
        <position position="192"/>
    </location>
    <ligand>
        <name>[Ni-Fe-S] cluster</name>
        <dbReference type="ChEBI" id="CHEBI:60400"/>
    </ligand>
</feature>
<feature type="binding site" evidence="1">
    <location>
        <position position="278"/>
    </location>
    <ligand>
        <name>[Ni-Fe-S] cluster</name>
        <dbReference type="ChEBI" id="CHEBI:60400"/>
    </ligand>
</feature>
<feature type="binding site" evidence="1">
    <location>
        <position position="280"/>
    </location>
    <ligand>
        <name>[Ni-Fe-S] cluster</name>
        <dbReference type="ChEBI" id="CHEBI:60400"/>
    </ligand>
</feature>
<keyword id="KW-0012">Acyltransferase</keyword>
<keyword id="KW-0408">Iron</keyword>
<keyword id="KW-0411">Iron-sulfur</keyword>
<keyword id="KW-0479">Metal-binding</keyword>
<keyword id="KW-0484">Methanogenesis</keyword>
<keyword id="KW-0533">Nickel</keyword>
<keyword id="KW-1185">Reference proteome</keyword>
<keyword id="KW-0808">Transferase</keyword>
<accession>Q8TRZ6</accession>
<comment type="function">
    <text evidence="2">Part of a complex that catalyzes the reversible cleavage of acetyl-CoA, allowing growth on acetate as sole source of carbon and energy. The alpha-epsilon complex generates CO from CO(2), while the beta subunit (this protein) combines the CO with CoA and a methyl group to form acetyl-CoA. The methyl group, which is incorporated into acetyl-CoA, is transferred to the beta subunit by a corrinoid iron-sulfur protein (the gamma-delta complex).</text>
</comment>
<comment type="catalytic activity">
    <reaction evidence="2">
        <text>Co(I)-[corrinoid Fe-S protein] + acetyl-CoA + H(+) = methyl-Co(III)-[corrinoid Fe-S protein] + CO + CoA</text>
        <dbReference type="Rhea" id="RHEA:45212"/>
        <dbReference type="Rhea" id="RHEA-COMP:11110"/>
        <dbReference type="Rhea" id="RHEA-COMP:11111"/>
        <dbReference type="ChEBI" id="CHEBI:15378"/>
        <dbReference type="ChEBI" id="CHEBI:17245"/>
        <dbReference type="ChEBI" id="CHEBI:57287"/>
        <dbReference type="ChEBI" id="CHEBI:57288"/>
        <dbReference type="ChEBI" id="CHEBI:85033"/>
        <dbReference type="ChEBI" id="CHEBI:85035"/>
        <dbReference type="EC" id="2.3.1.169"/>
    </reaction>
</comment>
<comment type="cofactor">
    <cofactor>
        <name>[Ni-Fe-S] cluster</name>
        <dbReference type="ChEBI" id="CHEBI:60400"/>
    </cofactor>
    <text>Binds 1 [Ni-Fe-S] cluster.</text>
</comment>
<comment type="pathway">
    <text>One-carbon metabolism; methanogenesis from acetate.</text>
</comment>
<comment type="subunit">
    <text evidence="3">Monomer. The ACDS complex is made up of alpha, epsilon, beta, gamma and delta chains with a probable stoichiometry of (alpha(2)epsilon(2))(4)-beta(8)-(gamma(1)delta(1))(8) (Potential).</text>
</comment>
<comment type="similarity">
    <text evidence="3">Belongs to the CdhC family.</text>
</comment>
<protein>
    <recommendedName>
        <fullName>Acetyl-CoA decarbonylase/synthase complex subunit beta 1</fullName>
        <shortName>ACDS complex subunit beta 1</shortName>
        <ecNumber>2.3.1.169</ecNumber>
    </recommendedName>
    <alternativeName>
        <fullName>ACDS complex acyltransferase 1</fullName>
    </alternativeName>
</protein>
<organism>
    <name type="scientific">Methanosarcina acetivorans (strain ATCC 35395 / DSM 2834 / JCM 12185 / C2A)</name>
    <dbReference type="NCBI Taxonomy" id="188937"/>
    <lineage>
        <taxon>Archaea</taxon>
        <taxon>Methanobacteriati</taxon>
        <taxon>Methanobacteriota</taxon>
        <taxon>Stenosarchaea group</taxon>
        <taxon>Methanomicrobia</taxon>
        <taxon>Methanosarcinales</taxon>
        <taxon>Methanosarcinaceae</taxon>
        <taxon>Methanosarcina</taxon>
    </lineage>
</organism>
<name>ACDB1_METAC</name>
<dbReference type="EC" id="2.3.1.169"/>
<dbReference type="EMBL" id="AE010299">
    <property type="protein sequence ID" value="AAM04444.1"/>
    <property type="molecule type" value="Genomic_DNA"/>
</dbReference>
<dbReference type="RefSeq" id="WP_011021049.1">
    <property type="nucleotide sequence ID" value="NC_003552.1"/>
</dbReference>
<dbReference type="SMR" id="Q8TRZ6"/>
<dbReference type="FunCoup" id="Q8TRZ6">
    <property type="interactions" value="72"/>
</dbReference>
<dbReference type="STRING" id="188937.MA_1014"/>
<dbReference type="EnsemblBacteria" id="AAM04444">
    <property type="protein sequence ID" value="AAM04444"/>
    <property type="gene ID" value="MA_1014"/>
</dbReference>
<dbReference type="GeneID" id="1472904"/>
<dbReference type="KEGG" id="mac:MA_1014"/>
<dbReference type="HOGENOM" id="CLU_613408_0_0_2"/>
<dbReference type="InParanoid" id="Q8TRZ6"/>
<dbReference type="OrthoDB" id="69951at2157"/>
<dbReference type="PhylomeDB" id="Q8TRZ6"/>
<dbReference type="UniPathway" id="UPA00642"/>
<dbReference type="Proteomes" id="UP000002487">
    <property type="component" value="Chromosome"/>
</dbReference>
<dbReference type="GO" id="GO:0016407">
    <property type="term" value="F:acetyltransferase activity"/>
    <property type="evidence" value="ECO:0007669"/>
    <property type="project" value="UniProtKB-UniRule"/>
</dbReference>
<dbReference type="GO" id="GO:0043885">
    <property type="term" value="F:anaerobic carbon-monoxide dehydrogenase activity"/>
    <property type="evidence" value="ECO:0007669"/>
    <property type="project" value="InterPro"/>
</dbReference>
<dbReference type="GO" id="GO:0043884">
    <property type="term" value="F:CO-methylating acetyl-CoA synthase activity"/>
    <property type="evidence" value="ECO:0007669"/>
    <property type="project" value="UniProtKB-EC"/>
</dbReference>
<dbReference type="GO" id="GO:0005506">
    <property type="term" value="F:iron ion binding"/>
    <property type="evidence" value="ECO:0007669"/>
    <property type="project" value="UniProtKB-UniRule"/>
</dbReference>
<dbReference type="GO" id="GO:0051536">
    <property type="term" value="F:iron-sulfur cluster binding"/>
    <property type="evidence" value="ECO:0007669"/>
    <property type="project" value="UniProtKB-KW"/>
</dbReference>
<dbReference type="GO" id="GO:0016151">
    <property type="term" value="F:nickel cation binding"/>
    <property type="evidence" value="ECO:0007669"/>
    <property type="project" value="UniProtKB-UniRule"/>
</dbReference>
<dbReference type="GO" id="GO:0006084">
    <property type="term" value="P:acetyl-CoA metabolic process"/>
    <property type="evidence" value="ECO:0007669"/>
    <property type="project" value="InterPro"/>
</dbReference>
<dbReference type="GO" id="GO:0019385">
    <property type="term" value="P:methanogenesis, from acetate"/>
    <property type="evidence" value="ECO:0007669"/>
    <property type="project" value="UniProtKB-UniRule"/>
</dbReference>
<dbReference type="FunFam" id="3.40.970.20:FF:000001">
    <property type="entry name" value="Acetyl-CoA decarbonylase/synthase complex subunit beta"/>
    <property type="match status" value="1"/>
</dbReference>
<dbReference type="FunFam" id="3.30.1650.10:FF:000001">
    <property type="entry name" value="Acetyl-CoA decarbonylase/synthase complex subunit beta 2"/>
    <property type="match status" value="1"/>
</dbReference>
<dbReference type="Gene3D" id="3.30.1650.10">
    <property type="entry name" value="Bifunctional carbon monoxide dehydrogenase/acetyl-coa synthase(codh/acs), Chain M, domain 3"/>
    <property type="match status" value="1"/>
</dbReference>
<dbReference type="Gene3D" id="3.40.1470.10">
    <property type="entry name" value="Bifunctional carbon monoxide dehydrogenase/acetyl-coa synthase(codh/acs), Chain M, domain 5"/>
    <property type="match status" value="1"/>
</dbReference>
<dbReference type="Gene3D" id="3.40.970.20">
    <property type="entry name" value="Carbon monoxide dehydrogenase alpha subunit. Chain D, domain 4"/>
    <property type="match status" value="1"/>
</dbReference>
<dbReference type="HAMAP" id="MF_01138">
    <property type="entry name" value="CdhC"/>
    <property type="match status" value="1"/>
</dbReference>
<dbReference type="InterPro" id="IPR045822">
    <property type="entry name" value="ACS_CODH_B_C"/>
</dbReference>
<dbReference type="InterPro" id="IPR004461">
    <property type="entry name" value="CO_DH/Ac-CoA_synth_bsu"/>
</dbReference>
<dbReference type="InterPro" id="IPR038571">
    <property type="entry name" value="CO_DH/Ac-CoA_synth_bsu_3_sf"/>
</dbReference>
<dbReference type="InterPro" id="IPR023432">
    <property type="entry name" value="CO_DH/Ac-CoA_synth_bsu_arc"/>
</dbReference>
<dbReference type="InterPro" id="IPR011254">
    <property type="entry name" value="Prismane-like_sf"/>
</dbReference>
<dbReference type="NCBIfam" id="TIGR00316">
    <property type="entry name" value="cdhC"/>
    <property type="match status" value="1"/>
</dbReference>
<dbReference type="NCBIfam" id="NF003379">
    <property type="entry name" value="PRK04456.1"/>
    <property type="match status" value="1"/>
</dbReference>
<dbReference type="PANTHER" id="PTHR42281">
    <property type="match status" value="1"/>
</dbReference>
<dbReference type="PANTHER" id="PTHR42281:SF1">
    <property type="entry name" value="ACETYL-COA DECARBONYLASE_SYNTHASE COMPLEX SUBUNIT BETA 1"/>
    <property type="match status" value="1"/>
</dbReference>
<dbReference type="Pfam" id="PF19436">
    <property type="entry name" value="ACS_CODH_B_C"/>
    <property type="match status" value="1"/>
</dbReference>
<dbReference type="Pfam" id="PF03598">
    <property type="entry name" value="CdhC"/>
    <property type="match status" value="1"/>
</dbReference>
<dbReference type="SUPFAM" id="SSF56821">
    <property type="entry name" value="Prismane protein-like"/>
    <property type="match status" value="1"/>
</dbReference>
<gene>
    <name type="primary">cdhC1</name>
    <name type="ordered locus">MA_1014</name>
</gene>
<evidence type="ECO:0000255" key="1"/>
<evidence type="ECO:0000255" key="2">
    <source>
        <dbReference type="HAMAP-Rule" id="MF_01138"/>
    </source>
</evidence>
<evidence type="ECO:0000305" key="3"/>
<sequence>MVEFPFEISPMFEGERVRKEGMFVELGGPKSLGLELVRAKPMDEIEDDKVTIVGPDLKEMEEGKTYPWAMIFNIGGELVEPDLESVVERRVHDFINYCQGIMHLNQRYDVWMRVSKDTAAKMDSFEPFGQAVMMLFKTELPFIEKMQVTFYTEQAEVEKQMETAKEIFKARDERTKDLHDEDVDVFYGCTLCQSFAPTNVCVVSPDRVSLCGAINWFDGRAAAKVDPEGPQFEIAKGDLLDANTGEYTGVNDIAKKLSAGEFDKIKLHSFFDSPHTSCGCFEVVGFYIPEVDGIGWVNREYQGMAPNGIGFSTMAGQTGGGKQIVGFLGIGINYFYSPKFIQADGGWNRVVWLPSMLKDKIIDTIPEDLKDKIATENDSTDIESLKAFLQEKGHPVVATWAAEEEEEEEEEEEEEVAVAAAPMMMPAAGFQMPAMPMMSGGSSGGIKLTFKNAKITIDKMIISEKKEKK</sequence>